<protein>
    <recommendedName>
        <fullName evidence="1">Nuclear egress protein 1</fullName>
    </recommendedName>
</protein>
<dbReference type="EMBL" id="U43400">
    <property type="protein sequence ID" value="AAC54699.1"/>
    <property type="molecule type" value="Genomic_DNA"/>
</dbReference>
<dbReference type="PIR" id="T41939">
    <property type="entry name" value="T41939"/>
</dbReference>
<dbReference type="SMR" id="P52361"/>
<dbReference type="Proteomes" id="UP000009246">
    <property type="component" value="Segment"/>
</dbReference>
<dbReference type="GO" id="GO:0044201">
    <property type="term" value="C:host cell nuclear inner membrane"/>
    <property type="evidence" value="ECO:0007669"/>
    <property type="project" value="UniProtKB-SubCell"/>
</dbReference>
<dbReference type="GO" id="GO:0016020">
    <property type="term" value="C:membrane"/>
    <property type="evidence" value="ECO:0007669"/>
    <property type="project" value="UniProtKB-KW"/>
</dbReference>
<dbReference type="GO" id="GO:0008270">
    <property type="term" value="F:zinc ion binding"/>
    <property type="evidence" value="ECO:0007669"/>
    <property type="project" value="UniProtKB-KW"/>
</dbReference>
<dbReference type="GO" id="GO:0046765">
    <property type="term" value="P:viral budding from nuclear membrane"/>
    <property type="evidence" value="ECO:0007669"/>
    <property type="project" value="InterPro"/>
</dbReference>
<dbReference type="HAMAP" id="MF_04023">
    <property type="entry name" value="HSV_NEC1"/>
    <property type="match status" value="1"/>
</dbReference>
<dbReference type="InterPro" id="IPR021152">
    <property type="entry name" value="Herpes_UL31"/>
</dbReference>
<dbReference type="Pfam" id="PF02718">
    <property type="entry name" value="Herpes_UL31"/>
    <property type="match status" value="1"/>
</dbReference>
<proteinExistence type="inferred from homology"/>
<gene>
    <name evidence="1" type="primary">NEC1</name>
    <name type="ordered locus">U37</name>
</gene>
<reference key="1">
    <citation type="journal article" date="1996" name="J. Virol.">
        <title>Determination and analysis of the complete nucleotide sequence of human herpesvirus.</title>
        <authorList>
            <person name="Nicholas J."/>
        </authorList>
    </citation>
    <scope>NUCLEOTIDE SEQUENCE [LARGE SCALE GENOMIC DNA]</scope>
</reference>
<sequence>MAIQSTRRLRRASSLLKKSKPYNKEKTNLSLSLSLKELHSVFKLFPEYELKFLNMMKLPITGKEPIKIPFDLSLHHQHTCLDLSPYANEQVSKSACVNCGTTNIPTASDAMVAYMNQISNVMQNRLYYYGFQKKVELIRMSAKQPTLFQIFYILSSIASNFLPIMFENNEKLNMYVVFQTRTLHIPCECINQIMTVSSGYTVLLDILHDSIVLHVLCKTIETSNIQIDINVLQRKIEEMDVPDEIGDKFEKLKHILPFI</sequence>
<accession>P52361</accession>
<organismHost>
    <name type="scientific">Homo sapiens</name>
    <name type="common">Human</name>
    <dbReference type="NCBI Taxonomy" id="9606"/>
</organismHost>
<name>NEC1_HHV7J</name>
<evidence type="ECO:0000255" key="1">
    <source>
        <dbReference type="HAMAP-Rule" id="MF_04023"/>
    </source>
</evidence>
<feature type="chain" id="PRO_0000116009" description="Nuclear egress protein 1">
    <location>
        <begin position="1"/>
        <end position="259"/>
    </location>
</feature>
<feature type="zinc finger region" description="CCCH-type" evidence="1">
    <location>
        <begin position="80"/>
        <end position="184"/>
    </location>
</feature>
<keyword id="KW-1043">Host membrane</keyword>
<keyword id="KW-1048">Host nucleus</keyword>
<keyword id="KW-0472">Membrane</keyword>
<keyword id="KW-0479">Metal-binding</keyword>
<keyword id="KW-0597">Phosphoprotein</keyword>
<keyword id="KW-1185">Reference proteome</keyword>
<keyword id="KW-0862">Zinc</keyword>
<keyword id="KW-0863">Zinc-finger</keyword>
<organism>
    <name type="scientific">Human herpesvirus 7 (strain JI)</name>
    <name type="common">HHV-7</name>
    <name type="synonym">Human T lymphotropic virus</name>
    <dbReference type="NCBI Taxonomy" id="57278"/>
    <lineage>
        <taxon>Viruses</taxon>
        <taxon>Duplodnaviria</taxon>
        <taxon>Heunggongvirae</taxon>
        <taxon>Peploviricota</taxon>
        <taxon>Herviviricetes</taxon>
        <taxon>Herpesvirales</taxon>
        <taxon>Orthoherpesviridae</taxon>
        <taxon>Betaherpesvirinae</taxon>
        <taxon>Roseolovirus</taxon>
        <taxon>Roseolovirus humanbeta7</taxon>
        <taxon>Human betaherpesvirus 7</taxon>
    </lineage>
</organism>
<comment type="function">
    <text evidence="1">Plays an essential role in virion nuclear egress, the first step of virion release from infected cell. Within the host nucleus, NEC1 interacts with the newly formed capsid through the vertexes and directs it to the inner nuclear membrane by associating with NEC2. Induces the budding of the capsid at the inner nuclear membrane as well as its envelopment into the perinuclear space. There, the NEC1/NEC2 complex promotes the fusion of the enveloped capsid with the outer nuclear membrane and the subsequent release of the viral capsid into the cytoplasm where it will reach the secondary budding sites in the host Golgi or trans-Golgi network.</text>
</comment>
<comment type="subunit">
    <text evidence="1">Forms a heterohexameric complex with NEC2. Interacts with capsid vertex specific component 2/CVC2; this interaction directs the capsid to the host inner nuclear membrane to initiate budding.</text>
</comment>
<comment type="subcellular location">
    <subcellularLocation>
        <location evidence="1">Host nucleus inner membrane</location>
    </subcellularLocation>
    <text evidence="1">Remains attached to the nucleus inner membrane through interaction with NEC2.</text>
</comment>
<comment type="PTM">
    <text evidence="1">Phosphorylated at serine residues in the N-terminus. This phosphorylation regulates the localization within the inner nuclear membrane.</text>
</comment>
<comment type="similarity">
    <text evidence="1">Belongs to the herpesviridae NEC1 protein family.</text>
</comment>